<keyword id="KW-0997">Cell inner membrane</keyword>
<keyword id="KW-1003">Cell membrane</keyword>
<keyword id="KW-0201">Cytochrome c-type biogenesis</keyword>
<keyword id="KW-1015">Disulfide bond</keyword>
<keyword id="KW-0472">Membrane</keyword>
<keyword id="KW-0676">Redox-active center</keyword>
<keyword id="KW-1185">Reference proteome</keyword>
<keyword id="KW-0812">Transmembrane</keyword>
<keyword id="KW-1133">Transmembrane helix</keyword>
<evidence type="ECO:0000250" key="1"/>
<evidence type="ECO:0000255" key="2"/>
<evidence type="ECO:0000255" key="3">
    <source>
        <dbReference type="PROSITE-ProRule" id="PRU00691"/>
    </source>
</evidence>
<evidence type="ECO:0000305" key="4"/>
<protein>
    <recommendedName>
        <fullName>Thiol:disulfide interchange protein DsbE</fullName>
    </recommendedName>
    <alternativeName>
        <fullName>Cytochrome c biogenesis protein CcmG</fullName>
    </alternativeName>
</protein>
<organism>
    <name type="scientific">Pasteurella multocida (strain Pm70)</name>
    <dbReference type="NCBI Taxonomy" id="272843"/>
    <lineage>
        <taxon>Bacteria</taxon>
        <taxon>Pseudomonadati</taxon>
        <taxon>Pseudomonadota</taxon>
        <taxon>Gammaproteobacteria</taxon>
        <taxon>Pasteurellales</taxon>
        <taxon>Pasteurellaceae</taxon>
        <taxon>Pasteurella</taxon>
    </lineage>
</organism>
<proteinExistence type="inferred from homology"/>
<sequence length="181" mass="20660">MNKKLYFPLILFLILVFAFAVQLLRNAQGDDPKALESALIGKPVPLRTLQDLFEEKQYGIEIFQQGKPILLNVWATWCPTCYAEHQYLNKLAQQGVTIIGIDYKDKSAQAIKWLKDLGNPYQIVLKDEKGSNGLDLGVYGAPETFVIDGQGIIHYRHAGDLNQKVWDEKIQPIYQKLVERK</sequence>
<accession>Q9CPM6</accession>
<gene>
    <name type="primary">dsbE</name>
    <name type="synonym">ccmG</name>
    <name type="ordered locus">PM0011</name>
</gene>
<name>DSBE_PASMU</name>
<feature type="chain" id="PRO_0000201297" description="Thiol:disulfide interchange protein DsbE">
    <location>
        <begin position="1"/>
        <end position="181"/>
    </location>
</feature>
<feature type="topological domain" description="Cytoplasmic" evidence="2">
    <location>
        <begin position="1"/>
        <end position="3"/>
    </location>
</feature>
<feature type="transmembrane region" description="Helical" evidence="2">
    <location>
        <begin position="4"/>
        <end position="24"/>
    </location>
</feature>
<feature type="topological domain" description="Periplasmic" evidence="2">
    <location>
        <begin position="25"/>
        <end position="181"/>
    </location>
</feature>
<feature type="domain" description="Thioredoxin" evidence="3">
    <location>
        <begin position="38"/>
        <end position="175"/>
    </location>
</feature>
<feature type="disulfide bond" description="Redox-active" evidence="3">
    <location>
        <begin position="78"/>
        <end position="81"/>
    </location>
</feature>
<reference key="1">
    <citation type="journal article" date="2001" name="Proc. Natl. Acad. Sci. U.S.A.">
        <title>Complete genomic sequence of Pasteurella multocida Pm70.</title>
        <authorList>
            <person name="May B.J."/>
            <person name="Zhang Q."/>
            <person name="Li L.L."/>
            <person name="Paustian M.L."/>
            <person name="Whittam T.S."/>
            <person name="Kapur V."/>
        </authorList>
    </citation>
    <scope>NUCLEOTIDE SEQUENCE [LARGE SCALE GENOMIC DNA]</scope>
    <source>
        <strain>Pm70</strain>
    </source>
</reference>
<comment type="function">
    <text evidence="1">Involved in disulfide bond formation. Catalyzes a late, reductive step in the assembly of periplasmic c-type cytochromes, probably the reduction of disulfide bonds of the apocytochrome c to allow covalent linkage with the heme. Possible subunit of a heme lyase (By similarity).</text>
</comment>
<comment type="subcellular location">
    <subcellularLocation>
        <location evidence="1">Cell inner membrane</location>
        <topology evidence="1">Single-pass membrane protein</topology>
        <orientation evidence="1">Periplasmic side</orientation>
    </subcellularLocation>
</comment>
<comment type="similarity">
    <text evidence="4">Belongs to the thioredoxin family. DsbE subfamily.</text>
</comment>
<dbReference type="EMBL" id="AE004439">
    <property type="protein sequence ID" value="AAK02095.1"/>
    <property type="molecule type" value="Genomic_DNA"/>
</dbReference>
<dbReference type="RefSeq" id="WP_005722249.1">
    <property type="nucleotide sequence ID" value="NC_002663.1"/>
</dbReference>
<dbReference type="SMR" id="Q9CPM6"/>
<dbReference type="STRING" id="272843.PM0011"/>
<dbReference type="EnsemblBacteria" id="AAK02095">
    <property type="protein sequence ID" value="AAK02095"/>
    <property type="gene ID" value="PM0011"/>
</dbReference>
<dbReference type="KEGG" id="pmu:PM0011"/>
<dbReference type="PATRIC" id="fig|272843.6.peg.11"/>
<dbReference type="HOGENOM" id="CLU_042529_19_1_6"/>
<dbReference type="OrthoDB" id="9799347at2"/>
<dbReference type="Proteomes" id="UP000000809">
    <property type="component" value="Chromosome"/>
</dbReference>
<dbReference type="GO" id="GO:0030288">
    <property type="term" value="C:outer membrane-bounded periplasmic space"/>
    <property type="evidence" value="ECO:0007669"/>
    <property type="project" value="InterPro"/>
</dbReference>
<dbReference type="GO" id="GO:0005886">
    <property type="term" value="C:plasma membrane"/>
    <property type="evidence" value="ECO:0007669"/>
    <property type="project" value="UniProtKB-SubCell"/>
</dbReference>
<dbReference type="GO" id="GO:0015036">
    <property type="term" value="F:disulfide oxidoreductase activity"/>
    <property type="evidence" value="ECO:0007669"/>
    <property type="project" value="InterPro"/>
</dbReference>
<dbReference type="GO" id="GO:0017004">
    <property type="term" value="P:cytochrome complex assembly"/>
    <property type="evidence" value="ECO:0007669"/>
    <property type="project" value="UniProtKB-KW"/>
</dbReference>
<dbReference type="CDD" id="cd03010">
    <property type="entry name" value="TlpA_like_DsbE"/>
    <property type="match status" value="1"/>
</dbReference>
<dbReference type="Gene3D" id="3.40.30.10">
    <property type="entry name" value="Glutaredoxin"/>
    <property type="match status" value="1"/>
</dbReference>
<dbReference type="InterPro" id="IPR004799">
    <property type="entry name" value="Periplasmic_diS_OxRdtase_DsbE"/>
</dbReference>
<dbReference type="InterPro" id="IPR013740">
    <property type="entry name" value="Redoxin"/>
</dbReference>
<dbReference type="InterPro" id="IPR036249">
    <property type="entry name" value="Thioredoxin-like_sf"/>
</dbReference>
<dbReference type="InterPro" id="IPR017937">
    <property type="entry name" value="Thioredoxin_CS"/>
</dbReference>
<dbReference type="InterPro" id="IPR013766">
    <property type="entry name" value="Thioredoxin_domain"/>
</dbReference>
<dbReference type="InterPro" id="IPR050553">
    <property type="entry name" value="Thioredoxin_ResA/DsbE_sf"/>
</dbReference>
<dbReference type="NCBIfam" id="TIGR00385">
    <property type="entry name" value="dsbE"/>
    <property type="match status" value="1"/>
</dbReference>
<dbReference type="PANTHER" id="PTHR42852">
    <property type="entry name" value="THIOL:DISULFIDE INTERCHANGE PROTEIN DSBE"/>
    <property type="match status" value="1"/>
</dbReference>
<dbReference type="PANTHER" id="PTHR42852:SF6">
    <property type="entry name" value="THIOL:DISULFIDE INTERCHANGE PROTEIN DSBE"/>
    <property type="match status" value="1"/>
</dbReference>
<dbReference type="Pfam" id="PF08534">
    <property type="entry name" value="Redoxin"/>
    <property type="match status" value="1"/>
</dbReference>
<dbReference type="SUPFAM" id="SSF52833">
    <property type="entry name" value="Thioredoxin-like"/>
    <property type="match status" value="1"/>
</dbReference>
<dbReference type="PROSITE" id="PS00194">
    <property type="entry name" value="THIOREDOXIN_1"/>
    <property type="match status" value="1"/>
</dbReference>
<dbReference type="PROSITE" id="PS51352">
    <property type="entry name" value="THIOREDOXIN_2"/>
    <property type="match status" value="1"/>
</dbReference>